<dbReference type="EMBL" id="BX548175">
    <property type="protein sequence ID" value="CAE21223.1"/>
    <property type="molecule type" value="Genomic_DNA"/>
</dbReference>
<dbReference type="RefSeq" id="WP_011130420.1">
    <property type="nucleotide sequence ID" value="NC_005071.1"/>
</dbReference>
<dbReference type="SMR" id="P59909"/>
<dbReference type="KEGG" id="pmt:PMT_1048"/>
<dbReference type="eggNOG" id="ENOG50322MB">
    <property type="taxonomic scope" value="Bacteria"/>
</dbReference>
<dbReference type="HOGENOM" id="CLU_3331542_0_0_3"/>
<dbReference type="Proteomes" id="UP000001423">
    <property type="component" value="Chromosome"/>
</dbReference>
<dbReference type="GO" id="GO:0009523">
    <property type="term" value="C:photosystem II"/>
    <property type="evidence" value="ECO:0007669"/>
    <property type="project" value="UniProtKB-KW"/>
</dbReference>
<dbReference type="GO" id="GO:0031676">
    <property type="term" value="C:plasma membrane-derived thylakoid membrane"/>
    <property type="evidence" value="ECO:0007669"/>
    <property type="project" value="UniProtKB-SubCell"/>
</dbReference>
<dbReference type="GO" id="GO:0030145">
    <property type="term" value="F:manganese ion binding"/>
    <property type="evidence" value="ECO:0007669"/>
    <property type="project" value="InterPro"/>
</dbReference>
<dbReference type="GO" id="GO:0015979">
    <property type="term" value="P:photosynthesis"/>
    <property type="evidence" value="ECO:0007669"/>
    <property type="project" value="UniProtKB-UniRule"/>
</dbReference>
<dbReference type="HAMAP" id="MF_00717">
    <property type="entry name" value="PSII_PsbY"/>
    <property type="match status" value="1"/>
</dbReference>
<dbReference type="InterPro" id="IPR009388">
    <property type="entry name" value="PSII_PsbY"/>
</dbReference>
<dbReference type="NCBIfam" id="NF009711">
    <property type="entry name" value="PRK13240.1"/>
    <property type="match status" value="1"/>
</dbReference>
<dbReference type="Pfam" id="PF06298">
    <property type="entry name" value="PsbY"/>
    <property type="match status" value="1"/>
</dbReference>
<reference key="1">
    <citation type="journal article" date="2003" name="Nature">
        <title>Genome divergence in two Prochlorococcus ecotypes reflects oceanic niche differentiation.</title>
        <authorList>
            <person name="Rocap G."/>
            <person name="Larimer F.W."/>
            <person name="Lamerdin J.E."/>
            <person name="Malfatti S."/>
            <person name="Chain P."/>
            <person name="Ahlgren N.A."/>
            <person name="Arellano A."/>
            <person name="Coleman M."/>
            <person name="Hauser L."/>
            <person name="Hess W.R."/>
            <person name="Johnson Z.I."/>
            <person name="Land M.L."/>
            <person name="Lindell D."/>
            <person name="Post A.F."/>
            <person name="Regala W."/>
            <person name="Shah M."/>
            <person name="Shaw S.L."/>
            <person name="Steglich C."/>
            <person name="Sullivan M.B."/>
            <person name="Ting C.S."/>
            <person name="Tolonen A."/>
            <person name="Webb E.A."/>
            <person name="Zinser E.R."/>
            <person name="Chisholm S.W."/>
        </authorList>
    </citation>
    <scope>NUCLEOTIDE SEQUENCE [LARGE SCALE GENOMIC DNA]</scope>
    <source>
        <strain>MIT 9313</strain>
    </source>
</reference>
<sequence>MILIVLLPILLAATWAFINIRGAALKQQGLGLVSKNKG</sequence>
<evidence type="ECO:0000255" key="1">
    <source>
        <dbReference type="HAMAP-Rule" id="MF_00717"/>
    </source>
</evidence>
<evidence type="ECO:0000305" key="2"/>
<protein>
    <recommendedName>
        <fullName evidence="1">Photosystem II reaction center protein Y</fullName>
    </recommendedName>
</protein>
<organism>
    <name type="scientific">Prochlorococcus marinus (strain MIT 9313)</name>
    <dbReference type="NCBI Taxonomy" id="74547"/>
    <lineage>
        <taxon>Bacteria</taxon>
        <taxon>Bacillati</taxon>
        <taxon>Cyanobacteriota</taxon>
        <taxon>Cyanophyceae</taxon>
        <taxon>Synechococcales</taxon>
        <taxon>Prochlorococcaceae</taxon>
        <taxon>Prochlorococcus</taxon>
    </lineage>
</organism>
<feature type="chain" id="PRO_0000216893" description="Photosystem II reaction center protein Y">
    <location>
        <begin position="1"/>
        <end position="38"/>
    </location>
</feature>
<feature type="transmembrane region" description="Helical" evidence="1">
    <location>
        <begin position="2"/>
        <end position="20"/>
    </location>
</feature>
<accession>P59909</accession>
<gene>
    <name evidence="1" type="primary">psbY</name>
    <name type="ordered locus">PMT_1048</name>
</gene>
<name>PSBY_PROMM</name>
<proteinExistence type="inferred from homology"/>
<comment type="function">
    <text evidence="1">Loosely associated component of the core of photosystem II (PSII), it is not always seen in crystals. PSII is a light-driven water plastoquinone oxidoreductase, using light energy to abstract electrons from H(2)O, generating a proton gradient subsequently used for ATP formation.</text>
</comment>
<comment type="subunit">
    <text evidence="2">PSII is composed of 1 copy each of membrane proteins PsbA, PsbB, PsbC, PsbD, PsbE, PsbF, PsbH, PsbI, PsbJ, PsbK, PsbL, PsbM, PsbT, PsbX, PsbY, Psb30/Ycf12, peripheral proteins PsbO, CyanoQ (PsbQ), PsbU, PsbV and a large number of cofactors. It forms dimeric complexes.</text>
</comment>
<comment type="subcellular location">
    <subcellularLocation>
        <location evidence="1">Cellular thylakoid membrane</location>
        <topology evidence="1">Single-pass membrane protein</topology>
    </subcellularLocation>
</comment>
<comment type="similarity">
    <text evidence="1">Belongs to the PsbY family.</text>
</comment>
<keyword id="KW-0472">Membrane</keyword>
<keyword id="KW-0602">Photosynthesis</keyword>
<keyword id="KW-0604">Photosystem II</keyword>
<keyword id="KW-1185">Reference proteome</keyword>
<keyword id="KW-0793">Thylakoid</keyword>
<keyword id="KW-0812">Transmembrane</keyword>
<keyword id="KW-1133">Transmembrane helix</keyword>